<dbReference type="EMBL" id="BC102537">
    <property type="protein sequence ID" value="AAI02538.1"/>
    <property type="molecule type" value="mRNA"/>
</dbReference>
<dbReference type="RefSeq" id="NP_001071505.1">
    <property type="nucleotide sequence ID" value="NM_001078037.2"/>
</dbReference>
<dbReference type="SMR" id="Q3T075"/>
<dbReference type="FunCoup" id="Q3T075">
    <property type="interactions" value="3625"/>
</dbReference>
<dbReference type="STRING" id="9913.ENSBTAP00000059137"/>
<dbReference type="PaxDb" id="9913-ENSBTAP00000042059"/>
<dbReference type="GeneID" id="613567"/>
<dbReference type="KEGG" id="bta:613567"/>
<dbReference type="CTD" id="9482"/>
<dbReference type="VEuPathDB" id="HostDB:ENSBTAG00000017815"/>
<dbReference type="eggNOG" id="KOG3202">
    <property type="taxonomic scope" value="Eukaryota"/>
</dbReference>
<dbReference type="HOGENOM" id="CLU_099972_1_0_1"/>
<dbReference type="InParanoid" id="Q3T075"/>
<dbReference type="OMA" id="DSTCYIA"/>
<dbReference type="OrthoDB" id="428895at2759"/>
<dbReference type="TreeFam" id="TF323262"/>
<dbReference type="Proteomes" id="UP000009136">
    <property type="component" value="Chromosome 19"/>
</dbReference>
<dbReference type="Bgee" id="ENSBTAG00000017815">
    <property type="expression patterns" value="Expressed in oocyte and 107 other cell types or tissues"/>
</dbReference>
<dbReference type="GO" id="GO:0012505">
    <property type="term" value="C:endomembrane system"/>
    <property type="evidence" value="ECO:0000318"/>
    <property type="project" value="GO_Central"/>
</dbReference>
<dbReference type="GO" id="GO:0043231">
    <property type="term" value="C:intracellular membrane-bounded organelle"/>
    <property type="evidence" value="ECO:0007669"/>
    <property type="project" value="UniProtKB-ARBA"/>
</dbReference>
<dbReference type="GO" id="GO:0031201">
    <property type="term" value="C:SNARE complex"/>
    <property type="evidence" value="ECO:0000318"/>
    <property type="project" value="GO_Central"/>
</dbReference>
<dbReference type="GO" id="GO:0005484">
    <property type="term" value="F:SNAP receptor activity"/>
    <property type="evidence" value="ECO:0000318"/>
    <property type="project" value="GO_Central"/>
</dbReference>
<dbReference type="GO" id="GO:0000149">
    <property type="term" value="F:SNARE binding"/>
    <property type="evidence" value="ECO:0000318"/>
    <property type="project" value="GO_Central"/>
</dbReference>
<dbReference type="GO" id="GO:0006886">
    <property type="term" value="P:intracellular protein transport"/>
    <property type="evidence" value="ECO:0000318"/>
    <property type="project" value="GO_Central"/>
</dbReference>
<dbReference type="GO" id="GO:0048278">
    <property type="term" value="P:vesicle docking"/>
    <property type="evidence" value="ECO:0000318"/>
    <property type="project" value="GO_Central"/>
</dbReference>
<dbReference type="GO" id="GO:0006906">
    <property type="term" value="P:vesicle fusion"/>
    <property type="evidence" value="ECO:0000318"/>
    <property type="project" value="GO_Central"/>
</dbReference>
<dbReference type="CDD" id="cd15852">
    <property type="entry name" value="SNARE_Syntaxin8"/>
    <property type="match status" value="1"/>
</dbReference>
<dbReference type="FunFam" id="1.20.5.110:FF:000036">
    <property type="entry name" value="Putative Syntaxin-8"/>
    <property type="match status" value="1"/>
</dbReference>
<dbReference type="Gene3D" id="1.20.5.110">
    <property type="match status" value="1"/>
</dbReference>
<dbReference type="InterPro" id="IPR045242">
    <property type="entry name" value="Syntaxin"/>
</dbReference>
<dbReference type="InterPro" id="IPR041875">
    <property type="entry name" value="Syntaxin-8_SNARE"/>
</dbReference>
<dbReference type="InterPro" id="IPR000727">
    <property type="entry name" value="T_SNARE_dom"/>
</dbReference>
<dbReference type="PANTHER" id="PTHR19957">
    <property type="entry name" value="SYNTAXIN"/>
    <property type="match status" value="1"/>
</dbReference>
<dbReference type="PANTHER" id="PTHR19957:SF124">
    <property type="entry name" value="SYNTAXIN-8"/>
    <property type="match status" value="1"/>
</dbReference>
<dbReference type="Pfam" id="PF05739">
    <property type="entry name" value="SNARE"/>
    <property type="match status" value="1"/>
</dbReference>
<dbReference type="SMART" id="SM00397">
    <property type="entry name" value="t_SNARE"/>
    <property type="match status" value="1"/>
</dbReference>
<dbReference type="SUPFAM" id="SSF58038">
    <property type="entry name" value="SNARE fusion complex"/>
    <property type="match status" value="1"/>
</dbReference>
<dbReference type="PROSITE" id="PS50192">
    <property type="entry name" value="T_SNARE"/>
    <property type="match status" value="1"/>
</dbReference>
<proteinExistence type="evidence at transcript level"/>
<reference key="1">
    <citation type="submission" date="2005-08" db="EMBL/GenBank/DDBJ databases">
        <authorList>
            <consortium name="NIH - Mammalian Gene Collection (MGC) project"/>
        </authorList>
    </citation>
    <scope>NUCLEOTIDE SEQUENCE [LARGE SCALE MRNA]</scope>
    <source>
        <strain>Crossbred X Angus</strain>
        <tissue>Liver</tissue>
    </source>
</reference>
<name>STX8_BOVIN</name>
<evidence type="ECO:0000250" key="1"/>
<evidence type="ECO:0000250" key="2">
    <source>
        <dbReference type="UniProtKB" id="O88983"/>
    </source>
</evidence>
<evidence type="ECO:0000255" key="3"/>
<evidence type="ECO:0000255" key="4">
    <source>
        <dbReference type="PROSITE-ProRule" id="PRU00202"/>
    </source>
</evidence>
<evidence type="ECO:0000305" key="5"/>
<protein>
    <recommendedName>
        <fullName>Syntaxin-8</fullName>
    </recommendedName>
</protein>
<organism>
    <name type="scientific">Bos taurus</name>
    <name type="common">Bovine</name>
    <dbReference type="NCBI Taxonomy" id="9913"/>
    <lineage>
        <taxon>Eukaryota</taxon>
        <taxon>Metazoa</taxon>
        <taxon>Chordata</taxon>
        <taxon>Craniata</taxon>
        <taxon>Vertebrata</taxon>
        <taxon>Euteleostomi</taxon>
        <taxon>Mammalia</taxon>
        <taxon>Eutheria</taxon>
        <taxon>Laurasiatheria</taxon>
        <taxon>Artiodactyla</taxon>
        <taxon>Ruminantia</taxon>
        <taxon>Pecora</taxon>
        <taxon>Bovidae</taxon>
        <taxon>Bovinae</taxon>
        <taxon>Bos</taxon>
    </lineage>
</organism>
<comment type="function">
    <text evidence="1">Vesicle trafficking protein that functions in the early secretory pathway, possibly by mediating retrograde transport from cis-Golgi membranes to the ER.</text>
</comment>
<comment type="subunit">
    <text evidence="1 2">Forms a SNARE complex with STX7, VTI1B and VAMP8 which functions in the homotypic fusion of late endosomes. Part of the SNARE core complex containing STX7, VAMP8 and VTI1B. Interacts with VAMP8 (By similarity). Interacts with HECTD3 (By similarity). Interacts with TPC1 (By similarity).</text>
</comment>
<comment type="subcellular location">
    <subcellularLocation>
        <location evidence="1">Membrane</location>
        <topology evidence="1">Single-pass type IV membrane protein</topology>
    </subcellularLocation>
    <text evidence="1">Preferentially associated with the early endosome. To a lesser extent, also present in late endosome, the plasma membrane and coated pits (By similarity).</text>
</comment>
<comment type="PTM">
    <text evidence="1">Ubiquitinated by HECTD3.</text>
</comment>
<comment type="similarity">
    <text evidence="5">Belongs to the syntaxin family.</text>
</comment>
<sequence length="236" mass="26760">MAPDPWFSTYDSTCQIAQEIAEKIQQRNQYERNGENTTKLTVTIRALLQKLKEKIALLKDLLLRAVATHQITQLEGDRRQNLLDDLVTRERLLLASFKNEGAEPDLIRSSLMTGGAKRGAPNPWLLEEPEETRGLGFDEIRQQQQKIIQEQDAGLDALSSIISRQKQMGQEIGNELDEQNEIIDDLANLVENTDEKLRTETRRVNLVDRKSTSCGMIMVILLLLVAIVVVAVWPTK</sequence>
<accession>Q3T075</accession>
<keyword id="KW-0175">Coiled coil</keyword>
<keyword id="KW-0472">Membrane</keyword>
<keyword id="KW-0597">Phosphoprotein</keyword>
<keyword id="KW-1185">Reference proteome</keyword>
<keyword id="KW-0812">Transmembrane</keyword>
<keyword id="KW-1133">Transmembrane helix</keyword>
<keyword id="KW-0813">Transport</keyword>
<keyword id="KW-0832">Ubl conjugation</keyword>
<gene>
    <name type="primary">STX8</name>
</gene>
<feature type="chain" id="PRO_0000283810" description="Syntaxin-8">
    <location>
        <begin position="1"/>
        <end position="236"/>
    </location>
</feature>
<feature type="topological domain" description="Cytoplasmic" evidence="3">
    <location>
        <begin position="1"/>
        <end position="215"/>
    </location>
</feature>
<feature type="transmembrane region" description="Helical; Anchor for type IV membrane protein" evidence="3">
    <location>
        <begin position="216"/>
        <end position="232"/>
    </location>
</feature>
<feature type="topological domain" description="Vesicular" evidence="3">
    <location>
        <begin position="233"/>
        <end position="236"/>
    </location>
</feature>
<feature type="domain" description="t-SNARE coiled-coil homology" evidence="4">
    <location>
        <begin position="145"/>
        <end position="207"/>
    </location>
</feature>
<feature type="coiled-coil region" evidence="3">
    <location>
        <begin position="42"/>
        <end position="65"/>
    </location>
</feature>
<feature type="modified residue" description="Phosphoserine" evidence="2">
    <location>
        <position position="160"/>
    </location>
</feature>